<proteinExistence type="inferred from homology"/>
<sequence>MAKAPNNAAAARVRKKVKKNVAEGIAHIHASFNNTIITITDRQGNALSWATSGGAGFKGSRKSTPFAAQVAAEAAGKVAIECGIKNLEVRIKGPGPGRESSVRALNNLGIKITQIQDVTPVPHNGCRPPKRRRI</sequence>
<gene>
    <name evidence="1" type="primary">rpsK</name>
    <name type="ordered locus">HEAR3143</name>
</gene>
<name>RS11_HERAR</name>
<keyword id="KW-1185">Reference proteome</keyword>
<keyword id="KW-0687">Ribonucleoprotein</keyword>
<keyword id="KW-0689">Ribosomal protein</keyword>
<keyword id="KW-0694">RNA-binding</keyword>
<keyword id="KW-0699">rRNA-binding</keyword>
<protein>
    <recommendedName>
        <fullName evidence="1">Small ribosomal subunit protein uS11</fullName>
    </recommendedName>
    <alternativeName>
        <fullName evidence="2">30S ribosomal protein S11</fullName>
    </alternativeName>
</protein>
<reference key="1">
    <citation type="journal article" date="2007" name="PLoS Genet.">
        <title>A tale of two oxidation states: bacterial colonization of arsenic-rich environments.</title>
        <authorList>
            <person name="Muller D."/>
            <person name="Medigue C."/>
            <person name="Koechler S."/>
            <person name="Barbe V."/>
            <person name="Barakat M."/>
            <person name="Talla E."/>
            <person name="Bonnefoy V."/>
            <person name="Krin E."/>
            <person name="Arsene-Ploetze F."/>
            <person name="Carapito C."/>
            <person name="Chandler M."/>
            <person name="Cournoyer B."/>
            <person name="Cruveiller S."/>
            <person name="Dossat C."/>
            <person name="Duval S."/>
            <person name="Heymann M."/>
            <person name="Leize E."/>
            <person name="Lieutaud A."/>
            <person name="Lievremont D."/>
            <person name="Makita Y."/>
            <person name="Mangenot S."/>
            <person name="Nitschke W."/>
            <person name="Ortet P."/>
            <person name="Perdrial N."/>
            <person name="Schoepp B."/>
            <person name="Siguier P."/>
            <person name="Simeonova D.D."/>
            <person name="Rouy Z."/>
            <person name="Segurens B."/>
            <person name="Turlin E."/>
            <person name="Vallenet D."/>
            <person name="van Dorsselaer A."/>
            <person name="Weiss S."/>
            <person name="Weissenbach J."/>
            <person name="Lett M.-C."/>
            <person name="Danchin A."/>
            <person name="Bertin P.N."/>
        </authorList>
    </citation>
    <scope>NUCLEOTIDE SEQUENCE [LARGE SCALE GENOMIC DNA]</scope>
    <source>
        <strain>ULPAs1</strain>
    </source>
</reference>
<dbReference type="EMBL" id="CU207211">
    <property type="protein sequence ID" value="CAL63252.1"/>
    <property type="molecule type" value="Genomic_DNA"/>
</dbReference>
<dbReference type="SMR" id="A4G9R5"/>
<dbReference type="STRING" id="204773.HEAR3143"/>
<dbReference type="KEGG" id="har:HEAR3143"/>
<dbReference type="eggNOG" id="COG0100">
    <property type="taxonomic scope" value="Bacteria"/>
</dbReference>
<dbReference type="HOGENOM" id="CLU_072439_5_0_4"/>
<dbReference type="OrthoDB" id="9806415at2"/>
<dbReference type="Proteomes" id="UP000006697">
    <property type="component" value="Chromosome"/>
</dbReference>
<dbReference type="GO" id="GO:1990904">
    <property type="term" value="C:ribonucleoprotein complex"/>
    <property type="evidence" value="ECO:0007669"/>
    <property type="project" value="UniProtKB-KW"/>
</dbReference>
<dbReference type="GO" id="GO:0005840">
    <property type="term" value="C:ribosome"/>
    <property type="evidence" value="ECO:0007669"/>
    <property type="project" value="UniProtKB-KW"/>
</dbReference>
<dbReference type="GO" id="GO:0019843">
    <property type="term" value="F:rRNA binding"/>
    <property type="evidence" value="ECO:0007669"/>
    <property type="project" value="UniProtKB-UniRule"/>
</dbReference>
<dbReference type="GO" id="GO:0003735">
    <property type="term" value="F:structural constituent of ribosome"/>
    <property type="evidence" value="ECO:0007669"/>
    <property type="project" value="InterPro"/>
</dbReference>
<dbReference type="GO" id="GO:0006412">
    <property type="term" value="P:translation"/>
    <property type="evidence" value="ECO:0007669"/>
    <property type="project" value="UniProtKB-UniRule"/>
</dbReference>
<dbReference type="FunFam" id="3.30.420.80:FF:000001">
    <property type="entry name" value="30S ribosomal protein S11"/>
    <property type="match status" value="1"/>
</dbReference>
<dbReference type="Gene3D" id="3.30.420.80">
    <property type="entry name" value="Ribosomal protein S11"/>
    <property type="match status" value="1"/>
</dbReference>
<dbReference type="HAMAP" id="MF_01310">
    <property type="entry name" value="Ribosomal_uS11"/>
    <property type="match status" value="1"/>
</dbReference>
<dbReference type="InterPro" id="IPR001971">
    <property type="entry name" value="Ribosomal_uS11"/>
</dbReference>
<dbReference type="InterPro" id="IPR019981">
    <property type="entry name" value="Ribosomal_uS11_bac-type"/>
</dbReference>
<dbReference type="InterPro" id="IPR018102">
    <property type="entry name" value="Ribosomal_uS11_CS"/>
</dbReference>
<dbReference type="InterPro" id="IPR036967">
    <property type="entry name" value="Ribosomal_uS11_sf"/>
</dbReference>
<dbReference type="NCBIfam" id="NF003698">
    <property type="entry name" value="PRK05309.1"/>
    <property type="match status" value="1"/>
</dbReference>
<dbReference type="NCBIfam" id="TIGR03632">
    <property type="entry name" value="uS11_bact"/>
    <property type="match status" value="1"/>
</dbReference>
<dbReference type="PANTHER" id="PTHR11759">
    <property type="entry name" value="40S RIBOSOMAL PROTEIN S14/30S RIBOSOMAL PROTEIN S11"/>
    <property type="match status" value="1"/>
</dbReference>
<dbReference type="Pfam" id="PF00411">
    <property type="entry name" value="Ribosomal_S11"/>
    <property type="match status" value="1"/>
</dbReference>
<dbReference type="PIRSF" id="PIRSF002131">
    <property type="entry name" value="Ribosomal_S11"/>
    <property type="match status" value="1"/>
</dbReference>
<dbReference type="SUPFAM" id="SSF53137">
    <property type="entry name" value="Translational machinery components"/>
    <property type="match status" value="1"/>
</dbReference>
<dbReference type="PROSITE" id="PS00054">
    <property type="entry name" value="RIBOSOMAL_S11"/>
    <property type="match status" value="1"/>
</dbReference>
<organism>
    <name type="scientific">Herminiimonas arsenicoxydans</name>
    <dbReference type="NCBI Taxonomy" id="204773"/>
    <lineage>
        <taxon>Bacteria</taxon>
        <taxon>Pseudomonadati</taxon>
        <taxon>Pseudomonadota</taxon>
        <taxon>Betaproteobacteria</taxon>
        <taxon>Burkholderiales</taxon>
        <taxon>Oxalobacteraceae</taxon>
        <taxon>Herminiimonas</taxon>
    </lineage>
</organism>
<accession>A4G9R5</accession>
<evidence type="ECO:0000255" key="1">
    <source>
        <dbReference type="HAMAP-Rule" id="MF_01310"/>
    </source>
</evidence>
<evidence type="ECO:0000305" key="2"/>
<comment type="function">
    <text evidence="1">Located on the platform of the 30S subunit, it bridges several disparate RNA helices of the 16S rRNA. Forms part of the Shine-Dalgarno cleft in the 70S ribosome.</text>
</comment>
<comment type="subunit">
    <text evidence="1">Part of the 30S ribosomal subunit. Interacts with proteins S7 and S18. Binds to IF-3.</text>
</comment>
<comment type="similarity">
    <text evidence="1">Belongs to the universal ribosomal protein uS11 family.</text>
</comment>
<feature type="chain" id="PRO_1000051836" description="Small ribosomal subunit protein uS11">
    <location>
        <begin position="1"/>
        <end position="134"/>
    </location>
</feature>